<proteinExistence type="inferred from homology"/>
<gene>
    <name evidence="1" type="primary">lipB</name>
    <name type="ordered locus">CKL_2274</name>
</gene>
<name>LIPB_CLOK5</name>
<comment type="function">
    <text evidence="1">Catalyzes the transfer of endogenously produced octanoic acid from octanoyl-acyl-carrier-protein onto the lipoyl domains of lipoate-dependent enzymes. Lipoyl-ACP can also act as a substrate although octanoyl-ACP is likely to be the physiological substrate.</text>
</comment>
<comment type="catalytic activity">
    <reaction evidence="1">
        <text>octanoyl-[ACP] + L-lysyl-[protein] = N(6)-octanoyl-L-lysyl-[protein] + holo-[ACP] + H(+)</text>
        <dbReference type="Rhea" id="RHEA:17665"/>
        <dbReference type="Rhea" id="RHEA-COMP:9636"/>
        <dbReference type="Rhea" id="RHEA-COMP:9685"/>
        <dbReference type="Rhea" id="RHEA-COMP:9752"/>
        <dbReference type="Rhea" id="RHEA-COMP:9928"/>
        <dbReference type="ChEBI" id="CHEBI:15378"/>
        <dbReference type="ChEBI" id="CHEBI:29969"/>
        <dbReference type="ChEBI" id="CHEBI:64479"/>
        <dbReference type="ChEBI" id="CHEBI:78463"/>
        <dbReference type="ChEBI" id="CHEBI:78809"/>
        <dbReference type="EC" id="2.3.1.181"/>
    </reaction>
</comment>
<comment type="pathway">
    <text evidence="1">Protein modification; protein lipoylation via endogenous pathway; protein N(6)-(lipoyl)lysine from octanoyl-[acyl-carrier-protein]: step 1/2.</text>
</comment>
<comment type="subcellular location">
    <subcellularLocation>
        <location evidence="1">Cytoplasm</location>
    </subcellularLocation>
</comment>
<comment type="miscellaneous">
    <text evidence="1">In the reaction, the free carboxyl group of octanoic acid is attached via an amide linkage to the epsilon-amino group of a specific lysine residue of lipoyl domains of lipoate-dependent enzymes.</text>
</comment>
<comment type="similarity">
    <text evidence="1">Belongs to the LipB family.</text>
</comment>
<keyword id="KW-0012">Acyltransferase</keyword>
<keyword id="KW-0963">Cytoplasm</keyword>
<keyword id="KW-1185">Reference proteome</keyword>
<keyword id="KW-0808">Transferase</keyword>
<sequence>MRKCYVKEFHKLISYSEGIEIQQKAFDFVIRNNIDGILLLLQHKPVITIGKSGGKNNILASKYELDKYSIDLCHTSRGGNVTYHGPGQLVGYPILNLNNFQKDIHLYLRQLELILINTVREYGIKAGIKPKYTGVWVGDRKIAAIGVGIRKWITRHGFAINISVNKEHFKLIVPCGIKEFGVCSLEDFTANVDYNDVVQKIENNFKMIFETDLIKEETVDNLFERSNLNLRIT</sequence>
<evidence type="ECO:0000255" key="1">
    <source>
        <dbReference type="HAMAP-Rule" id="MF_00013"/>
    </source>
</evidence>
<evidence type="ECO:0000255" key="2">
    <source>
        <dbReference type="PROSITE-ProRule" id="PRU01067"/>
    </source>
</evidence>
<organism>
    <name type="scientific">Clostridium kluyveri (strain ATCC 8527 / DSM 555 / NBRC 12016 / NCIMB 10680 / K1)</name>
    <dbReference type="NCBI Taxonomy" id="431943"/>
    <lineage>
        <taxon>Bacteria</taxon>
        <taxon>Bacillati</taxon>
        <taxon>Bacillota</taxon>
        <taxon>Clostridia</taxon>
        <taxon>Eubacteriales</taxon>
        <taxon>Clostridiaceae</taxon>
        <taxon>Clostridium</taxon>
    </lineage>
</organism>
<dbReference type="EC" id="2.3.1.181" evidence="1"/>
<dbReference type="EMBL" id="CP000673">
    <property type="protein sequence ID" value="EDK34286.1"/>
    <property type="molecule type" value="Genomic_DNA"/>
</dbReference>
<dbReference type="SMR" id="A5MZJ0"/>
<dbReference type="STRING" id="431943.CKL_2274"/>
<dbReference type="KEGG" id="ckl:CKL_2274"/>
<dbReference type="eggNOG" id="COG0321">
    <property type="taxonomic scope" value="Bacteria"/>
</dbReference>
<dbReference type="HOGENOM" id="CLU_035168_1_3_9"/>
<dbReference type="UniPathway" id="UPA00538">
    <property type="reaction ID" value="UER00592"/>
</dbReference>
<dbReference type="Proteomes" id="UP000002411">
    <property type="component" value="Chromosome"/>
</dbReference>
<dbReference type="GO" id="GO:0005737">
    <property type="term" value="C:cytoplasm"/>
    <property type="evidence" value="ECO:0007669"/>
    <property type="project" value="UniProtKB-SubCell"/>
</dbReference>
<dbReference type="GO" id="GO:0033819">
    <property type="term" value="F:lipoyl(octanoyl) transferase activity"/>
    <property type="evidence" value="ECO:0007669"/>
    <property type="project" value="UniProtKB-EC"/>
</dbReference>
<dbReference type="GO" id="GO:0036211">
    <property type="term" value="P:protein modification process"/>
    <property type="evidence" value="ECO:0007669"/>
    <property type="project" value="InterPro"/>
</dbReference>
<dbReference type="CDD" id="cd16444">
    <property type="entry name" value="LipB"/>
    <property type="match status" value="1"/>
</dbReference>
<dbReference type="Gene3D" id="3.30.930.10">
    <property type="entry name" value="Bira Bifunctional Protein, Domain 2"/>
    <property type="match status" value="1"/>
</dbReference>
<dbReference type="HAMAP" id="MF_00013">
    <property type="entry name" value="LipB"/>
    <property type="match status" value="1"/>
</dbReference>
<dbReference type="InterPro" id="IPR045864">
    <property type="entry name" value="aa-tRNA-synth_II/BPL/LPL"/>
</dbReference>
<dbReference type="InterPro" id="IPR004143">
    <property type="entry name" value="BPL_LPL_catalytic"/>
</dbReference>
<dbReference type="InterPro" id="IPR000544">
    <property type="entry name" value="Octanoyltransferase"/>
</dbReference>
<dbReference type="InterPro" id="IPR020605">
    <property type="entry name" value="Octanoyltransferase_CS"/>
</dbReference>
<dbReference type="NCBIfam" id="TIGR00214">
    <property type="entry name" value="lipB"/>
    <property type="match status" value="1"/>
</dbReference>
<dbReference type="PANTHER" id="PTHR10993:SF7">
    <property type="entry name" value="LIPOYLTRANSFERASE 2, MITOCHONDRIAL-RELATED"/>
    <property type="match status" value="1"/>
</dbReference>
<dbReference type="PANTHER" id="PTHR10993">
    <property type="entry name" value="OCTANOYLTRANSFERASE"/>
    <property type="match status" value="1"/>
</dbReference>
<dbReference type="Pfam" id="PF21948">
    <property type="entry name" value="LplA-B_cat"/>
    <property type="match status" value="1"/>
</dbReference>
<dbReference type="PIRSF" id="PIRSF016262">
    <property type="entry name" value="LPLase"/>
    <property type="match status" value="1"/>
</dbReference>
<dbReference type="SUPFAM" id="SSF55681">
    <property type="entry name" value="Class II aaRS and biotin synthetases"/>
    <property type="match status" value="1"/>
</dbReference>
<dbReference type="PROSITE" id="PS51733">
    <property type="entry name" value="BPL_LPL_CATALYTIC"/>
    <property type="match status" value="1"/>
</dbReference>
<dbReference type="PROSITE" id="PS01313">
    <property type="entry name" value="LIPB"/>
    <property type="match status" value="1"/>
</dbReference>
<protein>
    <recommendedName>
        <fullName evidence="1">Octanoyltransferase</fullName>
        <ecNumber evidence="1">2.3.1.181</ecNumber>
    </recommendedName>
    <alternativeName>
        <fullName evidence="1">Lipoate-protein ligase B</fullName>
    </alternativeName>
    <alternativeName>
        <fullName evidence="1">Lipoyl/octanoyl transferase</fullName>
    </alternativeName>
    <alternativeName>
        <fullName evidence="1">Octanoyl-[acyl-carrier-protein]-protein N-octanoyltransferase</fullName>
    </alternativeName>
</protein>
<accession>A5MZJ0</accession>
<feature type="chain" id="PRO_1000089450" description="Octanoyltransferase">
    <location>
        <begin position="1"/>
        <end position="233"/>
    </location>
</feature>
<feature type="domain" description="BPL/LPL catalytic" evidence="2">
    <location>
        <begin position="32"/>
        <end position="213"/>
    </location>
</feature>
<feature type="active site" description="Acyl-thioester intermediate" evidence="1">
    <location>
        <position position="175"/>
    </location>
</feature>
<feature type="binding site" evidence="1">
    <location>
        <begin position="77"/>
        <end position="84"/>
    </location>
    <ligand>
        <name>substrate</name>
    </ligand>
</feature>
<feature type="binding site" evidence="1">
    <location>
        <begin position="144"/>
        <end position="146"/>
    </location>
    <ligand>
        <name>substrate</name>
    </ligand>
</feature>
<feature type="binding site" evidence="1">
    <location>
        <begin position="157"/>
        <end position="159"/>
    </location>
    <ligand>
        <name>substrate</name>
    </ligand>
</feature>
<feature type="site" description="Lowers pKa of active site Cys" evidence="1">
    <location>
        <position position="141"/>
    </location>
</feature>
<reference key="1">
    <citation type="journal article" date="2008" name="Proc. Natl. Acad. Sci. U.S.A.">
        <title>The genome of Clostridium kluyveri, a strict anaerobe with unique metabolic features.</title>
        <authorList>
            <person name="Seedorf H."/>
            <person name="Fricke W.F."/>
            <person name="Veith B."/>
            <person name="Brueggemann H."/>
            <person name="Liesegang H."/>
            <person name="Strittmatter A."/>
            <person name="Miethke M."/>
            <person name="Buckel W."/>
            <person name="Hinderberger J."/>
            <person name="Li F."/>
            <person name="Hagemeier C."/>
            <person name="Thauer R.K."/>
            <person name="Gottschalk G."/>
        </authorList>
    </citation>
    <scope>NUCLEOTIDE SEQUENCE [LARGE SCALE GENOMIC DNA]</scope>
    <source>
        <strain>ATCC 8527 / DSM 555 / NBRC 12016 / NCIMB 10680 / K1</strain>
    </source>
</reference>